<sequence>MNHVTIKQSDTRADPFRVFIFGDQSSCNLSNLQLLLFKKSNVYLASFIDQVNLTLRHEIARLTAAERQSFPAFSSIQNLVARALKKDTSVALESTLATIYHLCCFLNYFGDGQEAYPTGPTTHVSGLCIGALAAAAVSSSKSLAELVQAGIDAVRVSLKVGLLVARTAALFSHQESNGTSSSPWSYAVPDSQLPLALAEEAIESYQAKTNIPPLSLPYISAKGQNSWTVSGPPAIVQHFLETSQFEKTLRLTRLAVHAPYHAPHIFSAIDVQHIIRAVGPVSSFSSKLSFISSSSSRNLPTGLNFQDLLCRAVEDILILPLDLREAAENIRLVLEATDNVQQCALFPISTGVCPSLKQSFSPATASRVSIVDCIMERATADAGPKSTSGPKPSESKIAIIGMSGRFPESADVEAFWDLLHQGLDVHRPVPPDRYNGELYYDVTGKRKNTCKVMHGCWINEPGLFDAKFFNISPKEAEQSDPGQRLALATAYEALEAAGVVADRTPSTQRDRVGVFYGMTSDDYREVSCGQNVDTYFIPGGNRAFTPGKINYFFKYCGPSVSVDTACSSSLAAIHLACNSIWRNECDTAIAGGTNVMSNPDSFVGLDRGYFLSRTGNCHTFDDEADGYCRADAVGTVILKRLEDAIADHDPILGVISGALTNHSADAVSITRPHSGAQEEIFSKLLTESGVHPHQVSYIEMHGTGTQAGDATEMTSVLNCFAPSTSPRRLPHESLHLGSTKANVGHSESASGVSALIKVLLMMEKNIIPPHCGIKGKINHKFPTDLDQRNVHIARTATQWNRRNEFNNIRRAFVNNFSAAGGNTALLVEDYPLLIADSSQQDARTAHVVTVSAKCIKSLKGNLENLKKFVQKQASTQGFLPKLSYTTTARRMHHPFRVAIPAANSEQLLSALDEELKHDGYTCSSESPVAFVFSGQGSQYSAMGQHLLHFTIFRDEVHAYDILARRHGFPSIMPLIDGSVDIEDLEPLVVQLGTVCVQMALASLWMALGMRPAYVVGHSLGHYAALKVAGVLTASDTIYLVAMRARLLQNKCSRGSHAMLAIRSSADEIQAHLDEGIHDIACISGPQDTVVSGCIDDIDRLSQKLTDKGIKATRVNVPFAFHSAQVDPILDELEATASQVEFHAPRVAIGCPLLGKTFKAGETPSLEANHIRRHCRETVNFLDVLRSAKDDGFVSEKTAWIEIGPHTVCSKLVKANISQDIVAVPSLMRNKDGWQVLASSVAALYRHGSSVAWDEYHHDFEACKQVLRLPAYSWDNKVYWIDYVHDWLLTRGDPPVQAAASLPAPPSSFSTASVHRIVHESVDKGKLTLTAECEFTNEQLREVVYGHVVNGNRVCSSSLYTDFGVTLGSYILEKYRPDLQDHAVDVQDMVVNKALVHKEGPTMLLRIDVVLDMTDSKAASMSIYSVNSKGNKTAEHAQSSLHFERPKVWLKSWDSTQYYVERSIEWLKEKADQGLNSRMSSGVIYKLFSSLVDYSTAYKGMQEAIVNTEDFEATALVRFQVDEGNFRCNPMWVDSCGQLAGFLMNGHAKTPKDQVFINHGWQSFRTVRKFSKDKTYRTYVRMRCIEGTTYAGDVYIFDDEGIVGVCGSITFQGIPRKVLNTAMPPPKSQNEAPVRSAPAKPAAKPPKSASSEHSGHFARHSNIEPLKLDAALKSATTARNPMLAVFKIVSEEIGIPSASVDNGLVFADYGVDSLLSLSISGRLREELDLDVESSAFETCATLADLATHLGLDTFSSDQSSGQSSSSGGLSPRSDSIGEITSSATTPPSLSPRGSVSGSQCKDVCAILAEEIGVSMSEITNDTDLGALGMDSLMSLAVLSRLREELELDLEGDFFVSHPNFSSFKHMFQQGHGDEVESEPSAELKQYRATSTLLQGNPKSALYTLFLLPDGSGSSFSYAPINAVRKDVCVFGLNCPWLKSAEKLVQFGLKGLATLYVEEIRRRAPHGPYNLGGWSAGGICAYEAAIQFTREGETVERLILLDSPNPIGLEKLPARLFDFVNGLGLFGDGKAPDWLLAHFLAFIDALDEWKPVPWDKALGGGNSPPPRTYILWAEDGICKDTDARPEYRDDDPREMKWLLENRTNFGGNNWDVLLGQQSLAIERIQDANHFTMLRKGKNSERVAAFIRSTFG</sequence>
<keyword id="KW-0511">Multifunctional enzyme</keyword>
<keyword id="KW-0596">Phosphopantetheine</keyword>
<keyword id="KW-0597">Phosphoprotein</keyword>
<keyword id="KW-0677">Repeat</keyword>
<keyword id="KW-0808">Transferase</keyword>
<feature type="chain" id="PRO_0000445745" description="Polyketide synthase 1">
    <location>
        <begin position="1"/>
        <end position="2149"/>
    </location>
</feature>
<feature type="domain" description="Ketosynthase family 3 (KS3)" evidence="5 11">
    <location>
        <begin position="394"/>
        <end position="829"/>
    </location>
</feature>
<feature type="domain" description="PKS/mFAS DH" evidence="6">
    <location>
        <begin position="1314"/>
        <end position="1619"/>
    </location>
</feature>
<feature type="domain" description="Carrier 1" evidence="4 11">
    <location>
        <begin position="1678"/>
        <end position="1752"/>
    </location>
</feature>
<feature type="domain" description="Carrier 2" evidence="4 11">
    <location>
        <begin position="1793"/>
        <end position="1870"/>
    </location>
</feature>
<feature type="region of interest" description="N-terminal acylcarrier protein transacylase domain (SAT)" evidence="3 11">
    <location>
        <begin position="19"/>
        <end position="261"/>
    </location>
</feature>
<feature type="region of interest" description="Malonyl-CoA:ACP transacylase (MAT) domain" evidence="3 11">
    <location>
        <begin position="929"/>
        <end position="1233"/>
    </location>
</feature>
<feature type="region of interest" description="Product template (PT) domain" evidence="3 11">
    <location>
        <begin position="1310"/>
        <end position="1624"/>
    </location>
</feature>
<feature type="region of interest" description="N-terminal hotdog fold" evidence="6">
    <location>
        <begin position="1314"/>
        <end position="1447"/>
    </location>
</feature>
<feature type="region of interest" description="C-terminal hotdog fold" evidence="6">
    <location>
        <begin position="1474"/>
        <end position="1619"/>
    </location>
</feature>
<feature type="region of interest" description="Disordered" evidence="8">
    <location>
        <begin position="1619"/>
        <end position="1657"/>
    </location>
</feature>
<feature type="region of interest" description="Disordered" evidence="8">
    <location>
        <begin position="1755"/>
        <end position="1796"/>
    </location>
</feature>
<feature type="region of interest" description="Thioesterase (TE) domain" evidence="3 11">
    <location>
        <begin position="1882"/>
        <end position="2147"/>
    </location>
</feature>
<feature type="compositionally biased region" description="Low complexity" evidence="8">
    <location>
        <begin position="1635"/>
        <end position="1650"/>
    </location>
</feature>
<feature type="compositionally biased region" description="Low complexity" evidence="8">
    <location>
        <begin position="1755"/>
        <end position="1790"/>
    </location>
</feature>
<feature type="active site" description="For beta-ketoacyl synthase activity" evidence="5">
    <location>
        <position position="566"/>
    </location>
</feature>
<feature type="active site" description="For beta-ketoacyl synthase activity" evidence="5">
    <location>
        <position position="701"/>
    </location>
</feature>
<feature type="active site" description="For beta-ketoacyl synthase activity" evidence="5">
    <location>
        <position position="745"/>
    </location>
</feature>
<feature type="active site" description="For acyl/malonyl transferase activity" evidence="7">
    <location>
        <position position="1018"/>
    </location>
</feature>
<feature type="active site" description="Proton acceptor; for dehydratase activity" evidence="6">
    <location>
        <position position="1346"/>
    </location>
</feature>
<feature type="active site" description="Proton donor; for dehydratase activity" evidence="6">
    <location>
        <position position="1533"/>
    </location>
</feature>
<feature type="active site" description="For thioesterase activity" evidence="2">
    <location>
        <position position="1973"/>
    </location>
</feature>
<feature type="modified residue" description="O-(pantetheine 4'-phosphoryl)serine" evidence="4">
    <location>
        <position position="1712"/>
    </location>
</feature>
<feature type="modified residue" description="O-(pantetheine 4'-phosphoryl)serine" evidence="4">
    <location>
        <position position="1830"/>
    </location>
</feature>
<comment type="function">
    <text evidence="1 9">Polyketide synthase; part of the Pks1 gene cluster that mediates the biosynthesis of an anthraquinone derivative pigment that contributes to conidial pigmentation that provides protection from UV radiation, heat and cold stress (PubMed:29958281). The polyketide synthase Pks1 produces 1-acetyl-2,4,6,8-tetrahydroxy-9,10-anthraquinone though condensation of acetyl-CoA with malonyl-CoA (By similarity). The dehydratase EthD and the laccase Mlac1 further convert the anthraquinone derivative into the final conidial pigment (By similarity).</text>
</comment>
<comment type="induction">
    <text evidence="1 9">Highly expressed during conidiation (PubMed:29958281). A conserved conidiation regulatory pathway containing BrlA, AbaA and WetA regulates expression. During conidiation BlrA up-regulates AbaA, which in turn controls WetA. Moreover, the Hog1 MAPK regulates fungal conidiation by controlling the conidiation regulatory pathway, and that all three pigmentation genes Pks1, EthD and Mlac1 exercise feedback regulation of conidiation (By similarity).</text>
</comment>
<comment type="domain">
    <text evidence="11">Multidomain protein; including a starter unit:ACP transacylase (SAT) that selects the starter unit; a ketosynthase (KS) that catalyzes repeated decarboxylative condensation to elongate the polyketide backbone; a malonyl-CoA:ACP transacylase (MAT) that selects and transfers the extender unit malonyl-CoA; a product template (PT) domain that controls the immediate cyclization regioselectivity of the reactive polyketide backbone; and an acyl-carrier protein (ACP) that serves as the tether of the growing and completed polyketide via its phosphopantetheinyl arm.</text>
</comment>
<comment type="domain">
    <text evidence="11">The release of the polyketide chain from the non-reducing polyketide synthase is mediated by the thioesterase (TE) domain localized at the C-ter of the protein.</text>
</comment>
<comment type="disruption phenotype">
    <text evidence="9">Results in red conidia.</text>
</comment>
<proteinExistence type="evidence at protein level"/>
<name>PKS1_METMF</name>
<gene>
    <name evidence="10" type="primary">Pks1</name>
    <name type="ORF">MAJ_09462</name>
</gene>
<evidence type="ECO:0000250" key="1">
    <source>
        <dbReference type="UniProtKB" id="E9F646"/>
    </source>
</evidence>
<evidence type="ECO:0000250" key="2">
    <source>
        <dbReference type="UniProtKB" id="Q03149"/>
    </source>
</evidence>
<evidence type="ECO:0000255" key="3"/>
<evidence type="ECO:0000255" key="4">
    <source>
        <dbReference type="PROSITE-ProRule" id="PRU00258"/>
    </source>
</evidence>
<evidence type="ECO:0000255" key="5">
    <source>
        <dbReference type="PROSITE-ProRule" id="PRU01348"/>
    </source>
</evidence>
<evidence type="ECO:0000255" key="6">
    <source>
        <dbReference type="PROSITE-ProRule" id="PRU01363"/>
    </source>
</evidence>
<evidence type="ECO:0000255" key="7">
    <source>
        <dbReference type="PROSITE-ProRule" id="PRU10022"/>
    </source>
</evidence>
<evidence type="ECO:0000256" key="8">
    <source>
        <dbReference type="SAM" id="MobiDB-lite"/>
    </source>
</evidence>
<evidence type="ECO:0000269" key="9">
    <source>
    </source>
</evidence>
<evidence type="ECO:0000303" key="10">
    <source>
    </source>
</evidence>
<evidence type="ECO:0000305" key="11">
    <source>
    </source>
</evidence>
<organism>
    <name type="scientific">Metarhizium majus (strain ARSEF 297)</name>
    <dbReference type="NCBI Taxonomy" id="1276143"/>
    <lineage>
        <taxon>Eukaryota</taxon>
        <taxon>Fungi</taxon>
        <taxon>Dikarya</taxon>
        <taxon>Ascomycota</taxon>
        <taxon>Pezizomycotina</taxon>
        <taxon>Sordariomycetes</taxon>
        <taxon>Hypocreomycetidae</taxon>
        <taxon>Hypocreales</taxon>
        <taxon>Clavicipitaceae</taxon>
        <taxon>Metarhizium</taxon>
        <taxon>Metarhizium majus</taxon>
    </lineage>
</organism>
<protein>
    <recommendedName>
        <fullName evidence="10">Polyketide synthase 1</fullName>
        <ecNumber evidence="9">2.3.1.-</ecNumber>
    </recommendedName>
    <alternativeName>
        <fullName evidence="10">Conidial pigment biosynthesis polyketide synthase</fullName>
    </alternativeName>
</protein>
<dbReference type="EC" id="2.3.1.-" evidence="9"/>
<dbReference type="EMBL" id="AZNE01000110">
    <property type="protein sequence ID" value="KID94570.1"/>
    <property type="molecule type" value="Genomic_DNA"/>
</dbReference>
<dbReference type="RefSeq" id="XP_014573564.1">
    <property type="nucleotide sequence ID" value="XM_014718078.1"/>
</dbReference>
<dbReference type="SMR" id="A0A0B4H4F0"/>
<dbReference type="ESTHER" id="metaq-pks1">
    <property type="family name" value="Thioesterase"/>
</dbReference>
<dbReference type="HOGENOM" id="CLU_000022_6_0_1"/>
<dbReference type="OrthoDB" id="329835at2759"/>
<dbReference type="GO" id="GO:0004315">
    <property type="term" value="F:3-oxoacyl-[acyl-carrier-protein] synthase activity"/>
    <property type="evidence" value="ECO:0007669"/>
    <property type="project" value="InterPro"/>
</dbReference>
<dbReference type="GO" id="GO:0004312">
    <property type="term" value="F:fatty acid synthase activity"/>
    <property type="evidence" value="ECO:0007669"/>
    <property type="project" value="TreeGrafter"/>
</dbReference>
<dbReference type="GO" id="GO:0031177">
    <property type="term" value="F:phosphopantetheine binding"/>
    <property type="evidence" value="ECO:0007669"/>
    <property type="project" value="InterPro"/>
</dbReference>
<dbReference type="GO" id="GO:0006633">
    <property type="term" value="P:fatty acid biosynthetic process"/>
    <property type="evidence" value="ECO:0007669"/>
    <property type="project" value="InterPro"/>
</dbReference>
<dbReference type="GO" id="GO:0046189">
    <property type="term" value="P:phenol-containing compound biosynthetic process"/>
    <property type="evidence" value="ECO:0007669"/>
    <property type="project" value="UniProtKB-ARBA"/>
</dbReference>
<dbReference type="GO" id="GO:0030639">
    <property type="term" value="P:polyketide biosynthetic process"/>
    <property type="evidence" value="ECO:0007669"/>
    <property type="project" value="UniProtKB-ARBA"/>
</dbReference>
<dbReference type="GO" id="GO:0009403">
    <property type="term" value="P:toxin biosynthetic process"/>
    <property type="evidence" value="ECO:0007669"/>
    <property type="project" value="UniProtKB-ARBA"/>
</dbReference>
<dbReference type="CDD" id="cd00833">
    <property type="entry name" value="PKS"/>
    <property type="match status" value="1"/>
</dbReference>
<dbReference type="FunFam" id="3.10.129.110:FF:000001">
    <property type="entry name" value="Sterigmatocystin biosynthesis polyketide synthase"/>
    <property type="match status" value="1"/>
</dbReference>
<dbReference type="FunFam" id="3.40.47.10:FF:000031">
    <property type="entry name" value="Sterigmatocystin biosynthesis polyketide synthase"/>
    <property type="match status" value="1"/>
</dbReference>
<dbReference type="FunFam" id="3.40.50.1820:FF:000116">
    <property type="entry name" value="Sterigmatocystin biosynthesis polyketide synthase"/>
    <property type="match status" value="1"/>
</dbReference>
<dbReference type="Gene3D" id="3.30.70.3290">
    <property type="match status" value="1"/>
</dbReference>
<dbReference type="Gene3D" id="3.40.47.10">
    <property type="match status" value="1"/>
</dbReference>
<dbReference type="Gene3D" id="1.10.1200.10">
    <property type="entry name" value="ACP-like"/>
    <property type="match status" value="2"/>
</dbReference>
<dbReference type="Gene3D" id="3.40.50.1820">
    <property type="entry name" value="alpha/beta hydrolase"/>
    <property type="match status" value="1"/>
</dbReference>
<dbReference type="Gene3D" id="3.40.366.10">
    <property type="entry name" value="Malonyl-Coenzyme A Acyl Carrier Protein, domain 2"/>
    <property type="match status" value="2"/>
</dbReference>
<dbReference type="Gene3D" id="3.10.129.110">
    <property type="entry name" value="Polyketide synthase dehydratase"/>
    <property type="match status" value="1"/>
</dbReference>
<dbReference type="InterPro" id="IPR029058">
    <property type="entry name" value="AB_hydrolase_fold"/>
</dbReference>
<dbReference type="InterPro" id="IPR001227">
    <property type="entry name" value="Ac_transferase_dom_sf"/>
</dbReference>
<dbReference type="InterPro" id="IPR036736">
    <property type="entry name" value="ACP-like_sf"/>
</dbReference>
<dbReference type="InterPro" id="IPR014043">
    <property type="entry name" value="Acyl_transferase_dom"/>
</dbReference>
<dbReference type="InterPro" id="IPR016035">
    <property type="entry name" value="Acyl_Trfase/lysoPLipase"/>
</dbReference>
<dbReference type="InterPro" id="IPR018201">
    <property type="entry name" value="Ketoacyl_synth_AS"/>
</dbReference>
<dbReference type="InterPro" id="IPR014031">
    <property type="entry name" value="Ketoacyl_synth_C"/>
</dbReference>
<dbReference type="InterPro" id="IPR014030">
    <property type="entry name" value="Ketoacyl_synth_N"/>
</dbReference>
<dbReference type="InterPro" id="IPR016036">
    <property type="entry name" value="Malonyl_transacylase_ACP-bd"/>
</dbReference>
<dbReference type="InterPro" id="IPR020841">
    <property type="entry name" value="PKS_Beta-ketoAc_synthase_dom"/>
</dbReference>
<dbReference type="InterPro" id="IPR042104">
    <property type="entry name" value="PKS_dehydratase_sf"/>
</dbReference>
<dbReference type="InterPro" id="IPR049551">
    <property type="entry name" value="PKS_DH_C"/>
</dbReference>
<dbReference type="InterPro" id="IPR049900">
    <property type="entry name" value="PKS_mFAS_DH"/>
</dbReference>
<dbReference type="InterPro" id="IPR050091">
    <property type="entry name" value="PKS_NRPS_Biosynth_Enz"/>
</dbReference>
<dbReference type="InterPro" id="IPR020806">
    <property type="entry name" value="PKS_PP-bd"/>
</dbReference>
<dbReference type="InterPro" id="IPR009081">
    <property type="entry name" value="PP-bd_ACP"/>
</dbReference>
<dbReference type="InterPro" id="IPR006162">
    <property type="entry name" value="Ppantetheine_attach_site"/>
</dbReference>
<dbReference type="InterPro" id="IPR030918">
    <property type="entry name" value="PT_fungal_PKS"/>
</dbReference>
<dbReference type="InterPro" id="IPR032088">
    <property type="entry name" value="SAT"/>
</dbReference>
<dbReference type="InterPro" id="IPR001031">
    <property type="entry name" value="Thioesterase"/>
</dbReference>
<dbReference type="InterPro" id="IPR016039">
    <property type="entry name" value="Thiolase-like"/>
</dbReference>
<dbReference type="NCBIfam" id="TIGR04532">
    <property type="entry name" value="PT_fungal_PKS"/>
    <property type="match status" value="1"/>
</dbReference>
<dbReference type="PANTHER" id="PTHR43775:SF45">
    <property type="entry name" value="CONIDIAL PIGMENT POLYKETIDE SYNTHASE ALB1"/>
    <property type="match status" value="1"/>
</dbReference>
<dbReference type="PANTHER" id="PTHR43775">
    <property type="entry name" value="FATTY ACID SYNTHASE"/>
    <property type="match status" value="1"/>
</dbReference>
<dbReference type="Pfam" id="PF00698">
    <property type="entry name" value="Acyl_transf_1"/>
    <property type="match status" value="1"/>
</dbReference>
<dbReference type="Pfam" id="PF22621">
    <property type="entry name" value="CurL-like_PKS_C"/>
    <property type="match status" value="1"/>
</dbReference>
<dbReference type="Pfam" id="PF00109">
    <property type="entry name" value="ketoacyl-synt"/>
    <property type="match status" value="1"/>
</dbReference>
<dbReference type="Pfam" id="PF02801">
    <property type="entry name" value="Ketoacyl-synt_C"/>
    <property type="match status" value="1"/>
</dbReference>
<dbReference type="Pfam" id="PF00550">
    <property type="entry name" value="PP-binding"/>
    <property type="match status" value="2"/>
</dbReference>
<dbReference type="Pfam" id="PF14765">
    <property type="entry name" value="PS-DH"/>
    <property type="match status" value="1"/>
</dbReference>
<dbReference type="Pfam" id="PF16073">
    <property type="entry name" value="SAT"/>
    <property type="match status" value="1"/>
</dbReference>
<dbReference type="Pfam" id="PF00975">
    <property type="entry name" value="Thioesterase"/>
    <property type="match status" value="1"/>
</dbReference>
<dbReference type="SMART" id="SM00827">
    <property type="entry name" value="PKS_AT"/>
    <property type="match status" value="1"/>
</dbReference>
<dbReference type="SMART" id="SM00825">
    <property type="entry name" value="PKS_KS"/>
    <property type="match status" value="1"/>
</dbReference>
<dbReference type="SMART" id="SM00823">
    <property type="entry name" value="PKS_PP"/>
    <property type="match status" value="2"/>
</dbReference>
<dbReference type="SUPFAM" id="SSF47336">
    <property type="entry name" value="ACP-like"/>
    <property type="match status" value="2"/>
</dbReference>
<dbReference type="SUPFAM" id="SSF53474">
    <property type="entry name" value="alpha/beta-Hydrolases"/>
    <property type="match status" value="1"/>
</dbReference>
<dbReference type="SUPFAM" id="SSF52151">
    <property type="entry name" value="FabD/lysophospholipase-like"/>
    <property type="match status" value="1"/>
</dbReference>
<dbReference type="SUPFAM" id="SSF55048">
    <property type="entry name" value="Probable ACP-binding domain of malonyl-CoA ACP transacylase"/>
    <property type="match status" value="1"/>
</dbReference>
<dbReference type="SUPFAM" id="SSF53901">
    <property type="entry name" value="Thiolase-like"/>
    <property type="match status" value="1"/>
</dbReference>
<dbReference type="PROSITE" id="PS50075">
    <property type="entry name" value="CARRIER"/>
    <property type="match status" value="2"/>
</dbReference>
<dbReference type="PROSITE" id="PS00606">
    <property type="entry name" value="KS3_1"/>
    <property type="match status" value="1"/>
</dbReference>
<dbReference type="PROSITE" id="PS52004">
    <property type="entry name" value="KS3_2"/>
    <property type="match status" value="1"/>
</dbReference>
<dbReference type="PROSITE" id="PS00012">
    <property type="entry name" value="PHOSPHOPANTETHEINE"/>
    <property type="match status" value="1"/>
</dbReference>
<dbReference type="PROSITE" id="PS52019">
    <property type="entry name" value="PKS_MFAS_DH"/>
    <property type="match status" value="1"/>
</dbReference>
<reference key="1">
    <citation type="journal article" date="2014" name="Proc. Natl. Acad. Sci. U.S.A.">
        <title>Trajectory and genomic determinants of fungal-pathogen speciation and host adaptation.</title>
        <authorList>
            <person name="Hu X."/>
            <person name="Xiao G."/>
            <person name="Zheng P."/>
            <person name="Shang Y."/>
            <person name="Su Y."/>
            <person name="Zhang X."/>
            <person name="Liu X."/>
            <person name="Zhan S."/>
            <person name="St Leger R.J."/>
            <person name="Wang C."/>
        </authorList>
    </citation>
    <scope>NUCLEOTIDE SEQUENCE [LARGE SCALE GENOMIC DNA]</scope>
    <source>
        <strain>ARSEF 297</strain>
    </source>
</reference>
<reference key="2">
    <citation type="journal article" date="2018" name="PLoS Genet.">
        <title>Duplication of a Pks gene cluster and subsequent functional diversification facilitate environmental adaptation in Metarhizium species.</title>
        <authorList>
            <person name="Zeng G."/>
            <person name="Zhang P."/>
            <person name="Zhang Q."/>
            <person name="Zhao H."/>
            <person name="Li Z."/>
            <person name="Zhang X."/>
            <person name="Wang C."/>
            <person name="Yin W.B."/>
            <person name="Fang W."/>
        </authorList>
    </citation>
    <scope>IDENTIFICATION</scope>
    <scope>DISRUPTION PHENOTYPE</scope>
    <scope>FUNCTION</scope>
    <scope>CATALYTIC ACTIVITY</scope>
    <scope>INDUCTION</scope>
    <scope>DOMAIN</scope>
</reference>
<accession>A0A0B4H4F0</accession>